<dbReference type="EC" id="3.1.-.-" evidence="1"/>
<dbReference type="EMBL" id="AM920435">
    <property type="protein sequence ID" value="CAP86119.1"/>
    <property type="molecule type" value="Genomic_DNA"/>
</dbReference>
<dbReference type="RefSeq" id="XP_002563313.1">
    <property type="nucleotide sequence ID" value="XM_002563267.1"/>
</dbReference>
<dbReference type="SMR" id="B6HEM2"/>
<dbReference type="STRING" id="500485.B6HEM2"/>
<dbReference type="GeneID" id="8313380"/>
<dbReference type="KEGG" id="pcs:N7525_009220"/>
<dbReference type="VEuPathDB" id="FungiDB:PCH_Pc20g07900"/>
<dbReference type="eggNOG" id="KOG2519">
    <property type="taxonomic scope" value="Eukaryota"/>
</dbReference>
<dbReference type="HOGENOM" id="CLU_032444_2_0_1"/>
<dbReference type="OMA" id="IQEVHID"/>
<dbReference type="OrthoDB" id="1937206at2759"/>
<dbReference type="BioCyc" id="PCHR:PC20G07900-MONOMER"/>
<dbReference type="Proteomes" id="UP000000724">
    <property type="component" value="Contig Pc00c20"/>
</dbReference>
<dbReference type="GO" id="GO:0005739">
    <property type="term" value="C:mitochondrion"/>
    <property type="evidence" value="ECO:0007669"/>
    <property type="project" value="UniProtKB-SubCell"/>
</dbReference>
<dbReference type="GO" id="GO:0005730">
    <property type="term" value="C:nucleolus"/>
    <property type="evidence" value="ECO:0007669"/>
    <property type="project" value="UniProtKB-SubCell"/>
</dbReference>
<dbReference type="GO" id="GO:0005654">
    <property type="term" value="C:nucleoplasm"/>
    <property type="evidence" value="ECO:0007669"/>
    <property type="project" value="UniProtKB-SubCell"/>
</dbReference>
<dbReference type="GO" id="GO:0008409">
    <property type="term" value="F:5'-3' exonuclease activity"/>
    <property type="evidence" value="ECO:0007669"/>
    <property type="project" value="UniProtKB-UniRule"/>
</dbReference>
<dbReference type="GO" id="GO:0017108">
    <property type="term" value="F:5'-flap endonuclease activity"/>
    <property type="evidence" value="ECO:0007669"/>
    <property type="project" value="UniProtKB-UniRule"/>
</dbReference>
<dbReference type="GO" id="GO:0003677">
    <property type="term" value="F:DNA binding"/>
    <property type="evidence" value="ECO:0007669"/>
    <property type="project" value="UniProtKB-UniRule"/>
</dbReference>
<dbReference type="GO" id="GO:0000287">
    <property type="term" value="F:magnesium ion binding"/>
    <property type="evidence" value="ECO:0007669"/>
    <property type="project" value="UniProtKB-UniRule"/>
</dbReference>
<dbReference type="GO" id="GO:0006284">
    <property type="term" value="P:base-excision repair"/>
    <property type="evidence" value="ECO:0007669"/>
    <property type="project" value="UniProtKB-UniRule"/>
</dbReference>
<dbReference type="GO" id="GO:0043137">
    <property type="term" value="P:DNA replication, removal of RNA primer"/>
    <property type="evidence" value="ECO:0007669"/>
    <property type="project" value="UniProtKB-UniRule"/>
</dbReference>
<dbReference type="CDD" id="cd09907">
    <property type="entry name" value="H3TH_FEN1-Euk"/>
    <property type="match status" value="1"/>
</dbReference>
<dbReference type="CDD" id="cd09867">
    <property type="entry name" value="PIN_FEN1"/>
    <property type="match status" value="1"/>
</dbReference>
<dbReference type="FunFam" id="1.10.150.20:FF:000009">
    <property type="entry name" value="Flap endonuclease 1"/>
    <property type="match status" value="1"/>
</dbReference>
<dbReference type="FunFam" id="3.40.50.1010:FF:000003">
    <property type="entry name" value="Flap endonuclease 1"/>
    <property type="match status" value="1"/>
</dbReference>
<dbReference type="Gene3D" id="1.10.150.20">
    <property type="entry name" value="5' to 3' exonuclease, C-terminal subdomain"/>
    <property type="match status" value="1"/>
</dbReference>
<dbReference type="Gene3D" id="3.40.50.1010">
    <property type="entry name" value="5'-nuclease"/>
    <property type="match status" value="1"/>
</dbReference>
<dbReference type="HAMAP" id="MF_00614">
    <property type="entry name" value="Fen"/>
    <property type="match status" value="1"/>
</dbReference>
<dbReference type="InterPro" id="IPR036279">
    <property type="entry name" value="5-3_exonuclease_C_sf"/>
</dbReference>
<dbReference type="InterPro" id="IPR023426">
    <property type="entry name" value="Flap_endonuc"/>
</dbReference>
<dbReference type="InterPro" id="IPR008918">
    <property type="entry name" value="HhH2"/>
</dbReference>
<dbReference type="InterPro" id="IPR029060">
    <property type="entry name" value="PIN-like_dom_sf"/>
</dbReference>
<dbReference type="InterPro" id="IPR006086">
    <property type="entry name" value="XPG-I_dom"/>
</dbReference>
<dbReference type="InterPro" id="IPR006084">
    <property type="entry name" value="XPG/Rad2"/>
</dbReference>
<dbReference type="InterPro" id="IPR019974">
    <property type="entry name" value="XPG_CS"/>
</dbReference>
<dbReference type="InterPro" id="IPR006085">
    <property type="entry name" value="XPG_DNA_repair_N"/>
</dbReference>
<dbReference type="PANTHER" id="PTHR11081:SF9">
    <property type="entry name" value="FLAP ENDONUCLEASE 1"/>
    <property type="match status" value="1"/>
</dbReference>
<dbReference type="PANTHER" id="PTHR11081">
    <property type="entry name" value="FLAP ENDONUCLEASE FAMILY MEMBER"/>
    <property type="match status" value="1"/>
</dbReference>
<dbReference type="Pfam" id="PF00867">
    <property type="entry name" value="XPG_I"/>
    <property type="match status" value="1"/>
</dbReference>
<dbReference type="Pfam" id="PF00752">
    <property type="entry name" value="XPG_N"/>
    <property type="match status" value="1"/>
</dbReference>
<dbReference type="PRINTS" id="PR00853">
    <property type="entry name" value="XPGRADSUPER"/>
</dbReference>
<dbReference type="SMART" id="SM00279">
    <property type="entry name" value="HhH2"/>
    <property type="match status" value="1"/>
</dbReference>
<dbReference type="SMART" id="SM00484">
    <property type="entry name" value="XPGI"/>
    <property type="match status" value="1"/>
</dbReference>
<dbReference type="SMART" id="SM00485">
    <property type="entry name" value="XPGN"/>
    <property type="match status" value="1"/>
</dbReference>
<dbReference type="SUPFAM" id="SSF47807">
    <property type="entry name" value="5' to 3' exonuclease, C-terminal subdomain"/>
    <property type="match status" value="1"/>
</dbReference>
<dbReference type="SUPFAM" id="SSF88723">
    <property type="entry name" value="PIN domain-like"/>
    <property type="match status" value="1"/>
</dbReference>
<dbReference type="PROSITE" id="PS00841">
    <property type="entry name" value="XPG_1"/>
    <property type="match status" value="1"/>
</dbReference>
<dbReference type="PROSITE" id="PS00842">
    <property type="entry name" value="XPG_2"/>
    <property type="match status" value="1"/>
</dbReference>
<reference key="1">
    <citation type="journal article" date="2008" name="Nat. Biotechnol.">
        <title>Genome sequencing and analysis of the filamentous fungus Penicillium chrysogenum.</title>
        <authorList>
            <person name="van den Berg M.A."/>
            <person name="Albang R."/>
            <person name="Albermann K."/>
            <person name="Badger J.H."/>
            <person name="Daran J.-M."/>
            <person name="Driessen A.J.M."/>
            <person name="Garcia-Estrada C."/>
            <person name="Fedorova N.D."/>
            <person name="Harris D.M."/>
            <person name="Heijne W.H.M."/>
            <person name="Joardar V.S."/>
            <person name="Kiel J.A.K.W."/>
            <person name="Kovalchuk A."/>
            <person name="Martin J.F."/>
            <person name="Nierman W.C."/>
            <person name="Nijland J.G."/>
            <person name="Pronk J.T."/>
            <person name="Roubos J.A."/>
            <person name="van der Klei I.J."/>
            <person name="van Peij N.N.M.E."/>
            <person name="Veenhuis M."/>
            <person name="von Doehren H."/>
            <person name="Wagner C."/>
            <person name="Wortman J.R."/>
            <person name="Bovenberg R.A.L."/>
        </authorList>
    </citation>
    <scope>NUCLEOTIDE SEQUENCE [LARGE SCALE GENOMIC DNA]</scope>
    <source>
        <strain>ATCC 28089 / DSM 1075 / NRRL 1951 / Wisconsin 54-1255</strain>
    </source>
</reference>
<evidence type="ECO:0000255" key="1">
    <source>
        <dbReference type="HAMAP-Rule" id="MF_03140"/>
    </source>
</evidence>
<evidence type="ECO:0000256" key="2">
    <source>
        <dbReference type="SAM" id="MobiDB-lite"/>
    </source>
</evidence>
<gene>
    <name type="primary">fen1</name>
    <name type="ORF">Pc20g07900</name>
</gene>
<comment type="function">
    <text evidence="1">Structure-specific nuclease with 5'-flap endonuclease and 5'-3' exonuclease activities involved in DNA replication and repair. During DNA replication, cleaves the 5'-overhanging flap structure that is generated by displacement synthesis when DNA polymerase encounters the 5'-end of a downstream Okazaki fragment. It enters the flap from the 5'-end and then tracks to cleave the flap base, leaving a nick for ligation. Also involved in the long patch base excision repair (LP-BER) pathway, by cleaving within the apurinic/apyrimidinic (AP) site-terminated flap. Acts as a genome stabilization factor that prevents flaps from equilibrating into structures that lead to duplications and deletions. Also possesses 5'-3' exonuclease activity on nicked or gapped double-stranded DNA, and exhibits RNase H activity. Also involved in replication and repair of rDNA and in repairing mitochondrial DNA.</text>
</comment>
<comment type="cofactor">
    <cofactor evidence="1">
        <name>Mg(2+)</name>
        <dbReference type="ChEBI" id="CHEBI:18420"/>
    </cofactor>
    <text evidence="1">Binds 2 magnesium ions per subunit. They probably participate in the reaction catalyzed by the enzyme. May bind an additional third magnesium ion after substrate binding.</text>
</comment>
<comment type="subunit">
    <text evidence="1">Interacts with PCNA. Three molecules of fen1 bind to one PCNA trimer with each molecule binding to one PCNA monomer. PCNA stimulates the nuclease activity without altering cleavage specificity.</text>
</comment>
<comment type="subcellular location">
    <subcellularLocation>
        <location evidence="1">Nucleus</location>
        <location evidence="1">Nucleolus</location>
    </subcellularLocation>
    <subcellularLocation>
        <location evidence="1">Nucleus</location>
        <location evidence="1">Nucleoplasm</location>
    </subcellularLocation>
    <subcellularLocation>
        <location evidence="1">Mitochondrion</location>
    </subcellularLocation>
    <text evidence="1">Resides mostly in the nucleoli and relocalizes to the nucleoplasm upon DNA damage.</text>
</comment>
<comment type="PTM">
    <text evidence="1">Phosphorylated. Phosphorylation upon DNA damage induces relocalization to the nuclear plasma.</text>
</comment>
<comment type="similarity">
    <text evidence="1">Belongs to the XPG/RAD2 endonuclease family. FEN1 subfamily.</text>
</comment>
<accession>B6HEM2</accession>
<feature type="chain" id="PRO_0000403589" description="Flap endonuclease 1">
    <location>
        <begin position="1"/>
        <end position="395"/>
    </location>
</feature>
<feature type="region of interest" description="N-domain">
    <location>
        <begin position="1"/>
        <end position="104"/>
    </location>
</feature>
<feature type="region of interest" description="I-domain">
    <location>
        <begin position="122"/>
        <end position="253"/>
    </location>
</feature>
<feature type="region of interest" description="Interaction with PCNA" evidence="1">
    <location>
        <begin position="341"/>
        <end position="349"/>
    </location>
</feature>
<feature type="region of interest" description="Disordered" evidence="2">
    <location>
        <begin position="345"/>
        <end position="395"/>
    </location>
</feature>
<feature type="compositionally biased region" description="Basic and acidic residues" evidence="2">
    <location>
        <begin position="353"/>
        <end position="371"/>
    </location>
</feature>
<feature type="compositionally biased region" description="Basic and acidic residues" evidence="2">
    <location>
        <begin position="378"/>
        <end position="389"/>
    </location>
</feature>
<feature type="binding site" evidence="1">
    <location>
        <position position="34"/>
    </location>
    <ligand>
        <name>Mg(2+)</name>
        <dbReference type="ChEBI" id="CHEBI:18420"/>
        <label>1</label>
    </ligand>
</feature>
<feature type="binding site" evidence="1">
    <location>
        <position position="47"/>
    </location>
    <ligand>
        <name>DNA</name>
        <dbReference type="ChEBI" id="CHEBI:16991"/>
    </ligand>
</feature>
<feature type="binding site" evidence="1">
    <location>
        <position position="70"/>
    </location>
    <ligand>
        <name>DNA</name>
        <dbReference type="ChEBI" id="CHEBI:16991"/>
    </ligand>
</feature>
<feature type="binding site" evidence="1">
    <location>
        <position position="86"/>
    </location>
    <ligand>
        <name>Mg(2+)</name>
        <dbReference type="ChEBI" id="CHEBI:18420"/>
        <label>1</label>
    </ligand>
</feature>
<feature type="binding site" evidence="1">
    <location>
        <position position="158"/>
    </location>
    <ligand>
        <name>DNA</name>
        <dbReference type="ChEBI" id="CHEBI:16991"/>
    </ligand>
</feature>
<feature type="binding site" evidence="1">
    <location>
        <position position="158"/>
    </location>
    <ligand>
        <name>Mg(2+)</name>
        <dbReference type="ChEBI" id="CHEBI:18420"/>
        <label>1</label>
    </ligand>
</feature>
<feature type="binding site" evidence="1">
    <location>
        <position position="160"/>
    </location>
    <ligand>
        <name>Mg(2+)</name>
        <dbReference type="ChEBI" id="CHEBI:18420"/>
        <label>1</label>
    </ligand>
</feature>
<feature type="binding site" evidence="1">
    <location>
        <position position="179"/>
    </location>
    <ligand>
        <name>Mg(2+)</name>
        <dbReference type="ChEBI" id="CHEBI:18420"/>
        <label>2</label>
    </ligand>
</feature>
<feature type="binding site" evidence="1">
    <location>
        <position position="181"/>
    </location>
    <ligand>
        <name>Mg(2+)</name>
        <dbReference type="ChEBI" id="CHEBI:18420"/>
        <label>2</label>
    </ligand>
</feature>
<feature type="binding site" evidence="1">
    <location>
        <position position="231"/>
    </location>
    <ligand>
        <name>DNA</name>
        <dbReference type="ChEBI" id="CHEBI:16991"/>
    </ligand>
</feature>
<feature type="binding site" evidence="1">
    <location>
        <position position="233"/>
    </location>
    <ligand>
        <name>DNA</name>
        <dbReference type="ChEBI" id="CHEBI:16991"/>
    </ligand>
</feature>
<feature type="binding site" evidence="1">
    <location>
        <position position="233"/>
    </location>
    <ligand>
        <name>Mg(2+)</name>
        <dbReference type="ChEBI" id="CHEBI:18420"/>
        <label>2</label>
    </ligand>
</feature>
<organism>
    <name type="scientific">Penicillium rubens (strain ATCC 28089 / DSM 1075 / NRRL 1951 / Wisconsin 54-1255)</name>
    <name type="common">Penicillium chrysogenum</name>
    <dbReference type="NCBI Taxonomy" id="500485"/>
    <lineage>
        <taxon>Eukaryota</taxon>
        <taxon>Fungi</taxon>
        <taxon>Dikarya</taxon>
        <taxon>Ascomycota</taxon>
        <taxon>Pezizomycotina</taxon>
        <taxon>Eurotiomycetes</taxon>
        <taxon>Eurotiomycetidae</taxon>
        <taxon>Eurotiales</taxon>
        <taxon>Aspergillaceae</taxon>
        <taxon>Penicillium</taxon>
        <taxon>Penicillium chrysogenum species complex</taxon>
    </lineage>
</organism>
<proteinExistence type="inferred from homology"/>
<name>FEN1_PENRW</name>
<keyword id="KW-0227">DNA damage</keyword>
<keyword id="KW-0234">DNA repair</keyword>
<keyword id="KW-0235">DNA replication</keyword>
<keyword id="KW-0255">Endonuclease</keyword>
<keyword id="KW-0269">Exonuclease</keyword>
<keyword id="KW-0378">Hydrolase</keyword>
<keyword id="KW-0460">Magnesium</keyword>
<keyword id="KW-0479">Metal-binding</keyword>
<keyword id="KW-0496">Mitochondrion</keyword>
<keyword id="KW-0540">Nuclease</keyword>
<keyword id="KW-0539">Nucleus</keyword>
<keyword id="KW-0597">Phosphoprotein</keyword>
<keyword id="KW-1185">Reference proteome</keyword>
<sequence>MGIKHLYQVISENAPDAIKTGEIKNHFGRKVAIDASMSIYSFLIAVRSEGQQLMSESGETTSHLMGMFYRTLRMVDNGIKPLYVFDGAPPKLKSGELAKRVARKAEATEAHEEAKETGTAEDIEKFSRRTVRVTREHNAECKKLLELMGIPFINAPTEAEAQCAVLARAGKVYAAASEDMDTLCFESPILLRHLTFSEQRKEPIQEIHLDRALEGLDMDRAQFIDLCILLGCDYLEPIPKVGATTALSLIKEHKSLEKVLEFMKNDPKKKFVVPEDWPYEDARELFTNPDVRPADHPECDFKWEAPNVEGLIEFLVGDKGFNEDRVRNGAARLSKHLKTAQQSRLEGFFKPVARTEDEKASLKRKHDEKLQQQKKKKKEDAKAKKEAKAKPRGAA</sequence>
<protein>
    <recommendedName>
        <fullName evidence="1">Flap endonuclease 1</fullName>
        <shortName evidence="1">FEN-1</shortName>
        <ecNumber evidence="1">3.1.-.-</ecNumber>
    </recommendedName>
    <alternativeName>
        <fullName evidence="1">Flap structure-specific endonuclease 1</fullName>
    </alternativeName>
</protein>